<name>GATA_NATPD</name>
<dbReference type="EC" id="6.3.5.7" evidence="1"/>
<dbReference type="EMBL" id="CR936257">
    <property type="protein sequence ID" value="CAI48819.1"/>
    <property type="molecule type" value="Genomic_DNA"/>
</dbReference>
<dbReference type="RefSeq" id="WP_011322454.1">
    <property type="nucleotide sequence ID" value="NC_007426.1"/>
</dbReference>
<dbReference type="SMR" id="Q3ISR6"/>
<dbReference type="STRING" id="348780.NP_1456A"/>
<dbReference type="EnsemblBacteria" id="CAI48819">
    <property type="protein sequence ID" value="CAI48819"/>
    <property type="gene ID" value="NP_1456A"/>
</dbReference>
<dbReference type="GeneID" id="3702359"/>
<dbReference type="KEGG" id="nph:NP_1456A"/>
<dbReference type="eggNOG" id="arCOG01717">
    <property type="taxonomic scope" value="Archaea"/>
</dbReference>
<dbReference type="HOGENOM" id="CLU_009600_0_3_2"/>
<dbReference type="OrthoDB" id="7931at2157"/>
<dbReference type="Proteomes" id="UP000002698">
    <property type="component" value="Chromosome"/>
</dbReference>
<dbReference type="GO" id="GO:0030956">
    <property type="term" value="C:glutamyl-tRNA(Gln) amidotransferase complex"/>
    <property type="evidence" value="ECO:0007669"/>
    <property type="project" value="InterPro"/>
</dbReference>
<dbReference type="GO" id="GO:0005524">
    <property type="term" value="F:ATP binding"/>
    <property type="evidence" value="ECO:0007669"/>
    <property type="project" value="UniProtKB-KW"/>
</dbReference>
<dbReference type="GO" id="GO:0050567">
    <property type="term" value="F:glutaminyl-tRNA synthase (glutamine-hydrolyzing) activity"/>
    <property type="evidence" value="ECO:0007669"/>
    <property type="project" value="UniProtKB-UniRule"/>
</dbReference>
<dbReference type="GO" id="GO:0006412">
    <property type="term" value="P:translation"/>
    <property type="evidence" value="ECO:0007669"/>
    <property type="project" value="UniProtKB-UniRule"/>
</dbReference>
<dbReference type="Gene3D" id="3.90.1300.10">
    <property type="entry name" value="Amidase signature (AS) domain"/>
    <property type="match status" value="1"/>
</dbReference>
<dbReference type="HAMAP" id="MF_00120">
    <property type="entry name" value="GatA"/>
    <property type="match status" value="1"/>
</dbReference>
<dbReference type="InterPro" id="IPR000120">
    <property type="entry name" value="Amidase"/>
</dbReference>
<dbReference type="InterPro" id="IPR020556">
    <property type="entry name" value="Amidase_CS"/>
</dbReference>
<dbReference type="InterPro" id="IPR023631">
    <property type="entry name" value="Amidase_dom"/>
</dbReference>
<dbReference type="InterPro" id="IPR036928">
    <property type="entry name" value="AS_sf"/>
</dbReference>
<dbReference type="InterPro" id="IPR004412">
    <property type="entry name" value="GatA"/>
</dbReference>
<dbReference type="NCBIfam" id="TIGR00132">
    <property type="entry name" value="gatA"/>
    <property type="match status" value="1"/>
</dbReference>
<dbReference type="PANTHER" id="PTHR11895:SF7">
    <property type="entry name" value="GLUTAMYL-TRNA(GLN) AMIDOTRANSFERASE SUBUNIT A, MITOCHONDRIAL"/>
    <property type="match status" value="1"/>
</dbReference>
<dbReference type="PANTHER" id="PTHR11895">
    <property type="entry name" value="TRANSAMIDASE"/>
    <property type="match status" value="1"/>
</dbReference>
<dbReference type="Pfam" id="PF01425">
    <property type="entry name" value="Amidase"/>
    <property type="match status" value="1"/>
</dbReference>
<dbReference type="SUPFAM" id="SSF75304">
    <property type="entry name" value="Amidase signature (AS) enzymes"/>
    <property type="match status" value="1"/>
</dbReference>
<dbReference type="PROSITE" id="PS00571">
    <property type="entry name" value="AMIDASES"/>
    <property type="match status" value="1"/>
</dbReference>
<comment type="function">
    <text evidence="1">Allows the formation of correctly charged Gln-tRNA(Gln) through the transamidation of misacylated Glu-tRNA(Gln) in organisms which lack glutaminyl-tRNA synthetase. The reaction takes place in the presence of glutamine and ATP through an activated gamma-phospho-Glu-tRNA(Gln).</text>
</comment>
<comment type="catalytic activity">
    <reaction evidence="1">
        <text>L-glutamyl-tRNA(Gln) + L-glutamine + ATP + H2O = L-glutaminyl-tRNA(Gln) + L-glutamate + ADP + phosphate + H(+)</text>
        <dbReference type="Rhea" id="RHEA:17521"/>
        <dbReference type="Rhea" id="RHEA-COMP:9681"/>
        <dbReference type="Rhea" id="RHEA-COMP:9684"/>
        <dbReference type="ChEBI" id="CHEBI:15377"/>
        <dbReference type="ChEBI" id="CHEBI:15378"/>
        <dbReference type="ChEBI" id="CHEBI:29985"/>
        <dbReference type="ChEBI" id="CHEBI:30616"/>
        <dbReference type="ChEBI" id="CHEBI:43474"/>
        <dbReference type="ChEBI" id="CHEBI:58359"/>
        <dbReference type="ChEBI" id="CHEBI:78520"/>
        <dbReference type="ChEBI" id="CHEBI:78521"/>
        <dbReference type="ChEBI" id="CHEBI:456216"/>
        <dbReference type="EC" id="6.3.5.7"/>
    </reaction>
</comment>
<comment type="subunit">
    <text evidence="1">Heterotrimer of A, B and C subunits.</text>
</comment>
<comment type="similarity">
    <text evidence="1">Belongs to the amidase family. GatA subfamily.</text>
</comment>
<keyword id="KW-0067">ATP-binding</keyword>
<keyword id="KW-0436">Ligase</keyword>
<keyword id="KW-0547">Nucleotide-binding</keyword>
<keyword id="KW-0648">Protein biosynthesis</keyword>
<keyword id="KW-1185">Reference proteome</keyword>
<feature type="chain" id="PRO_0000241184" description="Glutamyl-tRNA(Gln) amidotransferase subunit A">
    <location>
        <begin position="1"/>
        <end position="423"/>
    </location>
</feature>
<feature type="region of interest" description="Disordered" evidence="2">
    <location>
        <begin position="1"/>
        <end position="20"/>
    </location>
</feature>
<feature type="region of interest" description="Disordered" evidence="2">
    <location>
        <begin position="75"/>
        <end position="108"/>
    </location>
</feature>
<feature type="region of interest" description="Disordered" evidence="2">
    <location>
        <begin position="183"/>
        <end position="206"/>
    </location>
</feature>
<feature type="compositionally biased region" description="Acidic residues" evidence="2">
    <location>
        <begin position="10"/>
        <end position="19"/>
    </location>
</feature>
<feature type="active site" description="Charge relay system" evidence="1">
    <location>
        <position position="28"/>
    </location>
</feature>
<feature type="active site" description="Charge relay system" evidence="1">
    <location>
        <position position="103"/>
    </location>
</feature>
<feature type="active site" description="Acyl-ester intermediate" evidence="1">
    <location>
        <position position="127"/>
    </location>
</feature>
<organism>
    <name type="scientific">Natronomonas pharaonis (strain ATCC 35678 / DSM 2160 / CIP 103997 / JCM 8858 / NBRC 14720 / NCIMB 2260 / Gabara)</name>
    <name type="common">Halobacterium pharaonis</name>
    <dbReference type="NCBI Taxonomy" id="348780"/>
    <lineage>
        <taxon>Archaea</taxon>
        <taxon>Methanobacteriati</taxon>
        <taxon>Methanobacteriota</taxon>
        <taxon>Stenosarchaea group</taxon>
        <taxon>Halobacteria</taxon>
        <taxon>Halobacteriales</taxon>
        <taxon>Haloarculaceae</taxon>
        <taxon>Natronomonas</taxon>
    </lineage>
</organism>
<gene>
    <name evidence="1" type="primary">gatA</name>
    <name type="ordered locus">NP_1456A</name>
</gene>
<proteinExistence type="inferred from homology"/>
<protein>
    <recommendedName>
        <fullName evidence="1">Glutamyl-tRNA(Gln) amidotransferase subunit A</fullName>
        <shortName evidence="1">Glu-ADT subunit A</shortName>
        <ecNumber evidence="1">6.3.5.7</ecNumber>
    </recommendedName>
</protein>
<reference key="1">
    <citation type="journal article" date="2005" name="Genome Res.">
        <title>Living with two extremes: conclusions from the genome sequence of Natronomonas pharaonis.</title>
        <authorList>
            <person name="Falb M."/>
            <person name="Pfeiffer F."/>
            <person name="Palm P."/>
            <person name="Rodewald K."/>
            <person name="Hickmann V."/>
            <person name="Tittor J."/>
            <person name="Oesterhelt D."/>
        </authorList>
    </citation>
    <scope>NUCLEOTIDE SEQUENCE [LARGE SCALE GENOMIC DNA]</scope>
    <source>
        <strain>ATCC 35678 / DSM 2160 / CIP 103997 / JCM 8858 / NBRC 14720 / NCIMB 2260 / Gabara</strain>
    </source>
</reference>
<sequence length="423" mass="43770">MSHNAFITEETIEPTDDGPLDGVTVAVKDNISTDGVRTTCGSEMLADYVPPYDATVVERLRDAGATIVGKTNMDEFGMGTTTETSAFGPTENPAAEGRVPGGSSGGSAAAVAAGDADLALGSDTGGSVRCPAAFCGVVGIKPTYGLVSRYGLVAYANSLEQIGPLAPTVEEAAELLDVIAGVDERDGTTREPPAGQPTYADAADGDVDGLTVGIPTELVDGADEGVRETFDDAVETLESAGATTQEVSLPSVETAVQAYYVIAMSEASSNLARFDGVRYGASGDEDGNWNESFAAAREAGFGEEVKRRILLGTYALSAGYHDKYYKQAQDARAWVKQDFDEAFESVDVLASPTMPVPPFERGESLEDPLKMYLADANTVPVNLANLPAISVPAGETADGPVGLQLVGPAFGEATLIRAGSALN</sequence>
<evidence type="ECO:0000255" key="1">
    <source>
        <dbReference type="HAMAP-Rule" id="MF_00120"/>
    </source>
</evidence>
<evidence type="ECO:0000256" key="2">
    <source>
        <dbReference type="SAM" id="MobiDB-lite"/>
    </source>
</evidence>
<accession>Q3ISR6</accession>